<protein>
    <recommendedName>
        <fullName evidence="1">DNA-directed RNA polymerase subunit alpha</fullName>
        <shortName evidence="1">RNAP subunit alpha</shortName>
        <ecNumber evidence="1">2.7.7.6</ecNumber>
    </recommendedName>
    <alternativeName>
        <fullName evidence="1">RNA polymerase subunit alpha</fullName>
    </alternativeName>
    <alternativeName>
        <fullName evidence="1">Transcriptase subunit alpha</fullName>
    </alternativeName>
</protein>
<feature type="chain" id="PRO_0000175300" description="DNA-directed RNA polymerase subunit alpha">
    <location>
        <begin position="1"/>
        <end position="327"/>
    </location>
</feature>
<feature type="region of interest" description="Alpha N-terminal domain (alpha-NTD)" evidence="1">
    <location>
        <begin position="1"/>
        <end position="233"/>
    </location>
</feature>
<feature type="region of interest" description="Alpha C-terminal domain (alpha-CTD)" evidence="1">
    <location>
        <begin position="247"/>
        <end position="327"/>
    </location>
</feature>
<gene>
    <name evidence="1" type="primary">rpoA</name>
    <name type="ordered locus">CBU_0263</name>
</gene>
<accession>Q83EQ2</accession>
<evidence type="ECO:0000255" key="1">
    <source>
        <dbReference type="HAMAP-Rule" id="MF_00059"/>
    </source>
</evidence>
<keyword id="KW-0240">DNA-directed RNA polymerase</keyword>
<keyword id="KW-0548">Nucleotidyltransferase</keyword>
<keyword id="KW-1185">Reference proteome</keyword>
<keyword id="KW-0804">Transcription</keyword>
<keyword id="KW-0808">Transferase</keyword>
<organism>
    <name type="scientific">Coxiella burnetii (strain RSA 493 / Nine Mile phase I)</name>
    <dbReference type="NCBI Taxonomy" id="227377"/>
    <lineage>
        <taxon>Bacteria</taxon>
        <taxon>Pseudomonadati</taxon>
        <taxon>Pseudomonadota</taxon>
        <taxon>Gammaproteobacteria</taxon>
        <taxon>Legionellales</taxon>
        <taxon>Coxiellaceae</taxon>
        <taxon>Coxiella</taxon>
    </lineage>
</organism>
<proteinExistence type="inferred from homology"/>
<reference key="1">
    <citation type="journal article" date="2003" name="Proc. Natl. Acad. Sci. U.S.A.">
        <title>Complete genome sequence of the Q-fever pathogen, Coxiella burnetii.</title>
        <authorList>
            <person name="Seshadri R."/>
            <person name="Paulsen I.T."/>
            <person name="Eisen J.A."/>
            <person name="Read T.D."/>
            <person name="Nelson K.E."/>
            <person name="Nelson W.C."/>
            <person name="Ward N.L."/>
            <person name="Tettelin H."/>
            <person name="Davidsen T.M."/>
            <person name="Beanan M.J."/>
            <person name="DeBoy R.T."/>
            <person name="Daugherty S.C."/>
            <person name="Brinkac L.M."/>
            <person name="Madupu R."/>
            <person name="Dodson R.J."/>
            <person name="Khouri H.M."/>
            <person name="Lee K.H."/>
            <person name="Carty H.A."/>
            <person name="Scanlan D."/>
            <person name="Heinzen R.A."/>
            <person name="Thompson H.A."/>
            <person name="Samuel J.E."/>
            <person name="Fraser C.M."/>
            <person name="Heidelberg J.F."/>
        </authorList>
    </citation>
    <scope>NUCLEOTIDE SEQUENCE [LARGE SCALE GENOMIC DNA]</scope>
    <source>
        <strain>RSA 493 / Nine Mile phase I</strain>
    </source>
</reference>
<dbReference type="EC" id="2.7.7.6" evidence="1"/>
<dbReference type="EMBL" id="AE016828">
    <property type="protein sequence ID" value="AAO89821.1"/>
    <property type="molecule type" value="Genomic_DNA"/>
</dbReference>
<dbReference type="RefSeq" id="NP_819307.1">
    <property type="nucleotide sequence ID" value="NC_002971.4"/>
</dbReference>
<dbReference type="RefSeq" id="WP_005771496.1">
    <property type="nucleotide sequence ID" value="NZ_CDBG01000001.1"/>
</dbReference>
<dbReference type="SMR" id="Q83EQ2"/>
<dbReference type="STRING" id="227377.CBU_0263"/>
<dbReference type="DNASU" id="1208144"/>
<dbReference type="EnsemblBacteria" id="AAO89821">
    <property type="protein sequence ID" value="AAO89821"/>
    <property type="gene ID" value="CBU_0263"/>
</dbReference>
<dbReference type="GeneID" id="1208144"/>
<dbReference type="KEGG" id="cbu:CBU_0263"/>
<dbReference type="PATRIC" id="fig|227377.7.peg.258"/>
<dbReference type="eggNOG" id="COG0202">
    <property type="taxonomic scope" value="Bacteria"/>
</dbReference>
<dbReference type="HOGENOM" id="CLU_053084_0_0_6"/>
<dbReference type="OrthoDB" id="9805706at2"/>
<dbReference type="Proteomes" id="UP000002671">
    <property type="component" value="Chromosome"/>
</dbReference>
<dbReference type="GO" id="GO:0005737">
    <property type="term" value="C:cytoplasm"/>
    <property type="evidence" value="ECO:0000318"/>
    <property type="project" value="GO_Central"/>
</dbReference>
<dbReference type="GO" id="GO:0000428">
    <property type="term" value="C:DNA-directed RNA polymerase complex"/>
    <property type="evidence" value="ECO:0007669"/>
    <property type="project" value="UniProtKB-KW"/>
</dbReference>
<dbReference type="GO" id="GO:0003677">
    <property type="term" value="F:DNA binding"/>
    <property type="evidence" value="ECO:0007669"/>
    <property type="project" value="UniProtKB-UniRule"/>
</dbReference>
<dbReference type="GO" id="GO:0003899">
    <property type="term" value="F:DNA-directed RNA polymerase activity"/>
    <property type="evidence" value="ECO:0007669"/>
    <property type="project" value="UniProtKB-UniRule"/>
</dbReference>
<dbReference type="GO" id="GO:0046983">
    <property type="term" value="F:protein dimerization activity"/>
    <property type="evidence" value="ECO:0007669"/>
    <property type="project" value="InterPro"/>
</dbReference>
<dbReference type="GO" id="GO:0006351">
    <property type="term" value="P:DNA-templated transcription"/>
    <property type="evidence" value="ECO:0007669"/>
    <property type="project" value="UniProtKB-UniRule"/>
</dbReference>
<dbReference type="CDD" id="cd06928">
    <property type="entry name" value="RNAP_alpha_NTD"/>
    <property type="match status" value="1"/>
</dbReference>
<dbReference type="FunFam" id="1.10.150.20:FF:000001">
    <property type="entry name" value="DNA-directed RNA polymerase subunit alpha"/>
    <property type="match status" value="1"/>
</dbReference>
<dbReference type="FunFam" id="2.170.120.12:FF:000001">
    <property type="entry name" value="DNA-directed RNA polymerase subunit alpha"/>
    <property type="match status" value="1"/>
</dbReference>
<dbReference type="Gene3D" id="1.10.150.20">
    <property type="entry name" value="5' to 3' exonuclease, C-terminal subdomain"/>
    <property type="match status" value="1"/>
</dbReference>
<dbReference type="Gene3D" id="2.170.120.12">
    <property type="entry name" value="DNA-directed RNA polymerase, insert domain"/>
    <property type="match status" value="1"/>
</dbReference>
<dbReference type="Gene3D" id="3.30.1360.10">
    <property type="entry name" value="RNA polymerase, RBP11-like subunit"/>
    <property type="match status" value="1"/>
</dbReference>
<dbReference type="HAMAP" id="MF_00059">
    <property type="entry name" value="RNApol_bact_RpoA"/>
    <property type="match status" value="1"/>
</dbReference>
<dbReference type="InterPro" id="IPR011262">
    <property type="entry name" value="DNA-dir_RNA_pol_insert"/>
</dbReference>
<dbReference type="InterPro" id="IPR011263">
    <property type="entry name" value="DNA-dir_RNA_pol_RpoA/D/Rpb3"/>
</dbReference>
<dbReference type="InterPro" id="IPR011773">
    <property type="entry name" value="DNA-dir_RpoA"/>
</dbReference>
<dbReference type="InterPro" id="IPR036603">
    <property type="entry name" value="RBP11-like"/>
</dbReference>
<dbReference type="InterPro" id="IPR011260">
    <property type="entry name" value="RNAP_asu_C"/>
</dbReference>
<dbReference type="InterPro" id="IPR036643">
    <property type="entry name" value="RNApol_insert_sf"/>
</dbReference>
<dbReference type="NCBIfam" id="NF003513">
    <property type="entry name" value="PRK05182.1-2"/>
    <property type="match status" value="1"/>
</dbReference>
<dbReference type="NCBIfam" id="NF003519">
    <property type="entry name" value="PRK05182.2-5"/>
    <property type="match status" value="1"/>
</dbReference>
<dbReference type="NCBIfam" id="TIGR02027">
    <property type="entry name" value="rpoA"/>
    <property type="match status" value="1"/>
</dbReference>
<dbReference type="Pfam" id="PF01000">
    <property type="entry name" value="RNA_pol_A_bac"/>
    <property type="match status" value="1"/>
</dbReference>
<dbReference type="Pfam" id="PF03118">
    <property type="entry name" value="RNA_pol_A_CTD"/>
    <property type="match status" value="1"/>
</dbReference>
<dbReference type="Pfam" id="PF01193">
    <property type="entry name" value="RNA_pol_L"/>
    <property type="match status" value="1"/>
</dbReference>
<dbReference type="SMART" id="SM00662">
    <property type="entry name" value="RPOLD"/>
    <property type="match status" value="1"/>
</dbReference>
<dbReference type="SUPFAM" id="SSF47789">
    <property type="entry name" value="C-terminal domain of RNA polymerase alpha subunit"/>
    <property type="match status" value="1"/>
</dbReference>
<dbReference type="SUPFAM" id="SSF56553">
    <property type="entry name" value="Insert subdomain of RNA polymerase alpha subunit"/>
    <property type="match status" value="1"/>
</dbReference>
<dbReference type="SUPFAM" id="SSF55257">
    <property type="entry name" value="RBP11-like subunits of RNA polymerase"/>
    <property type="match status" value="1"/>
</dbReference>
<comment type="function">
    <text evidence="1">DNA-dependent RNA polymerase catalyzes the transcription of DNA into RNA using the four ribonucleoside triphosphates as substrates.</text>
</comment>
<comment type="catalytic activity">
    <reaction evidence="1">
        <text>RNA(n) + a ribonucleoside 5'-triphosphate = RNA(n+1) + diphosphate</text>
        <dbReference type="Rhea" id="RHEA:21248"/>
        <dbReference type="Rhea" id="RHEA-COMP:14527"/>
        <dbReference type="Rhea" id="RHEA-COMP:17342"/>
        <dbReference type="ChEBI" id="CHEBI:33019"/>
        <dbReference type="ChEBI" id="CHEBI:61557"/>
        <dbReference type="ChEBI" id="CHEBI:140395"/>
        <dbReference type="EC" id="2.7.7.6"/>
    </reaction>
</comment>
<comment type="subunit">
    <text evidence="1">Homodimer. The RNAP catalytic core consists of 2 alpha, 1 beta, 1 beta' and 1 omega subunit. When a sigma factor is associated with the core the holoenzyme is formed, which can initiate transcription.</text>
</comment>
<comment type="domain">
    <text evidence="1">The N-terminal domain is essential for RNAP assembly and basal transcription, whereas the C-terminal domain is involved in interaction with transcriptional regulators and with upstream promoter elements.</text>
</comment>
<comment type="similarity">
    <text evidence="1">Belongs to the RNA polymerase alpha chain family.</text>
</comment>
<name>RPOA_COXBU</name>
<sequence length="327" mass="35556">MQNVLKSFLTPKNIQVQTISPCHFRILLEPLERGFGHTLGNALRRILLSSMPGAAIVQAEIDGVLHEYSSIEGVREDVVDVLLNLKGVAIKLEGREDAKLTLHKKGAGTVTAGDIQTESGVKIVNPDHVIAHITKDGEINMTLKAAMGRGYEPSSARSTGDQSRSVGLLLLDASYSPIRRVTYSVENARVEKRTDLDKLIIDLETDGTLDPEEAIRFAAAVLQHQLAAFVDLKQESDRDGGGKEGKVNPLLLRPVEDLELTVRAANCLKAESINYIGDLVQCTENDLLKTPNLGKKSLLEIKSVLAQKGLSLGMDLKGWPPADLTDQ</sequence>